<evidence type="ECO:0000256" key="1">
    <source>
        <dbReference type="SAM" id="MobiDB-lite"/>
    </source>
</evidence>
<evidence type="ECO:0000305" key="2"/>
<dbReference type="EC" id="2.7.7.27"/>
<dbReference type="UniPathway" id="UPA00152"/>
<dbReference type="Proteomes" id="UP001155700">
    <property type="component" value="Unplaced"/>
</dbReference>
<dbReference type="GO" id="GO:0009501">
    <property type="term" value="C:amyloplast"/>
    <property type="evidence" value="ECO:0007669"/>
    <property type="project" value="UniProtKB-SubCell"/>
</dbReference>
<dbReference type="GO" id="GO:0009507">
    <property type="term" value="C:chloroplast"/>
    <property type="evidence" value="ECO:0007669"/>
    <property type="project" value="UniProtKB-SubCell"/>
</dbReference>
<dbReference type="GO" id="GO:0005524">
    <property type="term" value="F:ATP binding"/>
    <property type="evidence" value="ECO:0007669"/>
    <property type="project" value="UniProtKB-KW"/>
</dbReference>
<dbReference type="GO" id="GO:0008878">
    <property type="term" value="F:glucose-1-phosphate adenylyltransferase activity"/>
    <property type="evidence" value="ECO:0007669"/>
    <property type="project" value="UniProtKB-EC"/>
</dbReference>
<dbReference type="GO" id="GO:0019252">
    <property type="term" value="P:starch biosynthetic process"/>
    <property type="evidence" value="ECO:0007669"/>
    <property type="project" value="UniProtKB-UniPathway"/>
</dbReference>
<name>GLGL1_SPIOL</name>
<keyword id="KW-0021">Allosteric enzyme</keyword>
<keyword id="KW-0035">Amyloplast</keyword>
<keyword id="KW-0067">ATP-binding</keyword>
<keyword id="KW-0150">Chloroplast</keyword>
<keyword id="KW-0903">Direct protein sequencing</keyword>
<keyword id="KW-0547">Nucleotide-binding</keyword>
<keyword id="KW-0548">Nucleotidyltransferase</keyword>
<keyword id="KW-0934">Plastid</keyword>
<keyword id="KW-1185">Reference proteome</keyword>
<keyword id="KW-0750">Starch biosynthesis</keyword>
<keyword id="KW-0808">Transferase</keyword>
<feature type="chain" id="PRO_0000195358" description="Glucose-1-phosphate adenylyltransferase large subunit">
    <location>
        <begin position="1"/>
        <end position="21" status="greater than"/>
    </location>
</feature>
<feature type="region of interest" description="Disordered" evidence="1">
    <location>
        <begin position="1"/>
        <end position="21"/>
    </location>
</feature>
<feature type="compositionally biased region" description="Basic and acidic residues" evidence="1">
    <location>
        <begin position="8"/>
        <end position="21"/>
    </location>
</feature>
<feature type="non-terminal residue">
    <location>
        <position position="21"/>
    </location>
</feature>
<comment type="function">
    <text>This protein plays a role in synthesis of starch. It catalyzes the synthesis of the activated glycosyl donor, ADP-glucose from Glc-1-P and ATP.</text>
</comment>
<comment type="catalytic activity">
    <reaction>
        <text>alpha-D-glucose 1-phosphate + ATP + H(+) = ADP-alpha-D-glucose + diphosphate</text>
        <dbReference type="Rhea" id="RHEA:12120"/>
        <dbReference type="ChEBI" id="CHEBI:15378"/>
        <dbReference type="ChEBI" id="CHEBI:30616"/>
        <dbReference type="ChEBI" id="CHEBI:33019"/>
        <dbReference type="ChEBI" id="CHEBI:57498"/>
        <dbReference type="ChEBI" id="CHEBI:58601"/>
        <dbReference type="EC" id="2.7.7.27"/>
    </reaction>
</comment>
<comment type="activity regulation">
    <text>Activated by 3'phosphoglycerate, inhibited by orthophosphate. Allosteric regulation.</text>
</comment>
<comment type="pathway">
    <text>Glycan biosynthesis; starch biosynthesis.</text>
</comment>
<comment type="subunit">
    <text>Heterotetramer.</text>
</comment>
<comment type="subcellular location">
    <subcellularLocation>
        <location>Plastid</location>
        <location>Chloroplast</location>
    </subcellularLocation>
    <subcellularLocation>
        <location>Plastid</location>
        <location>Amyloplast</location>
    </subcellularLocation>
    <text>Found in the chloroplast in leaf. Found in the plastid in the developing endosperm.</text>
</comment>
<comment type="similarity">
    <text evidence="2">Belongs to the bacterial/plant glucose-1-phosphate adenylyltransferase family.</text>
</comment>
<accession>P55236</accession>
<reference key="1">
    <citation type="journal article" date="1987" name="Plant Physiol.">
        <title>Subunit structure of spinach leaf ADPglucose pyrophosphorylase.</title>
        <authorList>
            <person name="Morell M.K."/>
            <person name="Bloom M."/>
            <person name="Knowles V."/>
            <person name="Preiss J."/>
        </authorList>
    </citation>
    <scope>PROTEIN SEQUENCE</scope>
    <source>
        <tissue>Leaf</tissue>
    </source>
</reference>
<organism>
    <name type="scientific">Spinacia oleracea</name>
    <name type="common">Spinach</name>
    <dbReference type="NCBI Taxonomy" id="3562"/>
    <lineage>
        <taxon>Eukaryota</taxon>
        <taxon>Viridiplantae</taxon>
        <taxon>Streptophyta</taxon>
        <taxon>Embryophyta</taxon>
        <taxon>Tracheophyta</taxon>
        <taxon>Spermatophyta</taxon>
        <taxon>Magnoliopsida</taxon>
        <taxon>eudicotyledons</taxon>
        <taxon>Gunneridae</taxon>
        <taxon>Pentapetalae</taxon>
        <taxon>Caryophyllales</taxon>
        <taxon>Chenopodiaceae</taxon>
        <taxon>Chenopodioideae</taxon>
        <taxon>Anserineae</taxon>
        <taxon>Spinacia</taxon>
    </lineage>
</organism>
<sequence>SVTADNASETKVREIGQEKSS</sequence>
<protein>
    <recommendedName>
        <fullName>Glucose-1-phosphate adenylyltransferase large subunit</fullName>
        <ecNumber>2.7.7.27</ecNumber>
    </recommendedName>
    <alternativeName>
        <fullName>ADP-glucose pyrophosphorylase</fullName>
    </alternativeName>
    <alternativeName>
        <fullName>ADP-glucose synthase</fullName>
    </alternativeName>
    <alternativeName>
        <fullName>AGPase S</fullName>
    </alternativeName>
    <alternativeName>
        <fullName>Alpha-D-glucose-1-phosphate adenyl transferase</fullName>
    </alternativeName>
</protein>
<proteinExistence type="evidence at protein level"/>